<keyword id="KW-0025">Alternative splicing</keyword>
<keyword id="KW-0238">DNA-binding</keyword>
<keyword id="KW-0479">Metal-binding</keyword>
<keyword id="KW-0539">Nucleus</keyword>
<keyword id="KW-1185">Reference proteome</keyword>
<keyword id="KW-0804">Transcription</keyword>
<keyword id="KW-0805">Transcription regulation</keyword>
<keyword id="KW-0862">Zinc</keyword>
<keyword id="KW-0863">Zinc-finger</keyword>
<accession>B9F1L8</accession>
<accession>C7DQD5</accession>
<accession>Q0DYQ8</accession>
<accession>Q6EPG2</accession>
<accession>Q9SXG7</accession>
<proteinExistence type="evidence at transcript level"/>
<reference key="1">
    <citation type="online journal article" date="1999" name="Plant Gene Register">
        <title>Molecular analysis of rice cDNAs encoding Dof proteins in germinated aleurone cells.</title>
        <authorList>
            <person name="Washio K."/>
        </authorList>
        <locator>PGR99-107</locator>
    </citation>
    <scope>NUCLEOTIDE SEQUENCE [MRNA] (ISOFORM 2)</scope>
    <source>
        <strain>cv. Yukihikari</strain>
        <tissue>Aleurone</tissue>
    </source>
</reference>
<reference key="2">
    <citation type="journal article" date="2005" name="Nature">
        <title>The map-based sequence of the rice genome.</title>
        <authorList>
            <consortium name="International rice genome sequencing project (IRGSP)"/>
        </authorList>
    </citation>
    <scope>NUCLEOTIDE SEQUENCE [LARGE SCALE GENOMIC DNA]</scope>
    <source>
        <strain>cv. Nipponbare</strain>
    </source>
</reference>
<reference key="3">
    <citation type="journal article" date="2008" name="Nucleic Acids Res.">
        <title>The rice annotation project database (RAP-DB): 2008 update.</title>
        <authorList>
            <consortium name="The rice annotation project (RAP)"/>
        </authorList>
    </citation>
    <scope>GENOME REANNOTATION</scope>
    <source>
        <strain>cv. Nipponbare</strain>
    </source>
</reference>
<reference key="4">
    <citation type="journal article" date="2013" name="Rice">
        <title>Improvement of the Oryza sativa Nipponbare reference genome using next generation sequence and optical map data.</title>
        <authorList>
            <person name="Kawahara Y."/>
            <person name="de la Bastide M."/>
            <person name="Hamilton J.P."/>
            <person name="Kanamori H."/>
            <person name="McCombie W.R."/>
            <person name="Ouyang S."/>
            <person name="Schwartz D.C."/>
            <person name="Tanaka T."/>
            <person name="Wu J."/>
            <person name="Zhou S."/>
            <person name="Childs K.L."/>
            <person name="Davidson R.M."/>
            <person name="Lin H."/>
            <person name="Quesada-Ocampo L."/>
            <person name="Vaillancourt B."/>
            <person name="Sakai H."/>
            <person name="Lee S.S."/>
            <person name="Kim J."/>
            <person name="Numa H."/>
            <person name="Itoh T."/>
            <person name="Buell C.R."/>
            <person name="Matsumoto T."/>
        </authorList>
    </citation>
    <scope>GENOME REANNOTATION</scope>
    <source>
        <strain>cv. Nipponbare</strain>
    </source>
</reference>
<reference key="5">
    <citation type="journal article" date="2005" name="PLoS Biol.">
        <title>The genomes of Oryza sativa: a history of duplications.</title>
        <authorList>
            <person name="Yu J."/>
            <person name="Wang J."/>
            <person name="Lin W."/>
            <person name="Li S."/>
            <person name="Li H."/>
            <person name="Zhou J."/>
            <person name="Ni P."/>
            <person name="Dong W."/>
            <person name="Hu S."/>
            <person name="Zeng C."/>
            <person name="Zhang J."/>
            <person name="Zhang Y."/>
            <person name="Li R."/>
            <person name="Xu Z."/>
            <person name="Li S."/>
            <person name="Li X."/>
            <person name="Zheng H."/>
            <person name="Cong L."/>
            <person name="Lin L."/>
            <person name="Yin J."/>
            <person name="Geng J."/>
            <person name="Li G."/>
            <person name="Shi J."/>
            <person name="Liu J."/>
            <person name="Lv H."/>
            <person name="Li J."/>
            <person name="Wang J."/>
            <person name="Deng Y."/>
            <person name="Ran L."/>
            <person name="Shi X."/>
            <person name="Wang X."/>
            <person name="Wu Q."/>
            <person name="Li C."/>
            <person name="Ren X."/>
            <person name="Wang J."/>
            <person name="Wang X."/>
            <person name="Li D."/>
            <person name="Liu D."/>
            <person name="Zhang X."/>
            <person name="Ji Z."/>
            <person name="Zhao W."/>
            <person name="Sun Y."/>
            <person name="Zhang Z."/>
            <person name="Bao J."/>
            <person name="Han Y."/>
            <person name="Dong L."/>
            <person name="Ji J."/>
            <person name="Chen P."/>
            <person name="Wu S."/>
            <person name="Liu J."/>
            <person name="Xiao Y."/>
            <person name="Bu D."/>
            <person name="Tan J."/>
            <person name="Yang L."/>
            <person name="Ye C."/>
            <person name="Zhang J."/>
            <person name="Xu J."/>
            <person name="Zhou Y."/>
            <person name="Yu Y."/>
            <person name="Zhang B."/>
            <person name="Zhuang S."/>
            <person name="Wei H."/>
            <person name="Liu B."/>
            <person name="Lei M."/>
            <person name="Yu H."/>
            <person name="Li Y."/>
            <person name="Xu H."/>
            <person name="Wei S."/>
            <person name="He X."/>
            <person name="Fang L."/>
            <person name="Zhang Z."/>
            <person name="Zhang Y."/>
            <person name="Huang X."/>
            <person name="Su Z."/>
            <person name="Tong W."/>
            <person name="Li J."/>
            <person name="Tong Z."/>
            <person name="Li S."/>
            <person name="Ye J."/>
            <person name="Wang L."/>
            <person name="Fang L."/>
            <person name="Lei T."/>
            <person name="Chen C.-S."/>
            <person name="Chen H.-C."/>
            <person name="Xu Z."/>
            <person name="Li H."/>
            <person name="Huang H."/>
            <person name="Zhang F."/>
            <person name="Xu H."/>
            <person name="Li N."/>
            <person name="Zhao C."/>
            <person name="Li S."/>
            <person name="Dong L."/>
            <person name="Huang Y."/>
            <person name="Li L."/>
            <person name="Xi Y."/>
            <person name="Qi Q."/>
            <person name="Li W."/>
            <person name="Zhang B."/>
            <person name="Hu W."/>
            <person name="Zhang Y."/>
            <person name="Tian X."/>
            <person name="Jiao Y."/>
            <person name="Liang X."/>
            <person name="Jin J."/>
            <person name="Gao L."/>
            <person name="Zheng W."/>
            <person name="Hao B."/>
            <person name="Liu S.-M."/>
            <person name="Wang W."/>
            <person name="Yuan L."/>
            <person name="Cao M."/>
            <person name="McDermott J."/>
            <person name="Samudrala R."/>
            <person name="Wang J."/>
            <person name="Wong G.K.-S."/>
            <person name="Yang H."/>
        </authorList>
    </citation>
    <scope>NUCLEOTIDE SEQUENCE [LARGE SCALE GENOMIC DNA]</scope>
    <source>
        <strain>cv. Nipponbare</strain>
    </source>
</reference>
<reference key="6">
    <citation type="submission" date="2009-05" db="EMBL/GenBank/DDBJ databases">
        <title>Oryza sativa japonica group Dof-type zinc finger protein 04 mRNA, partial cds.</title>
        <authorList>
            <person name="Gaur V.S."/>
            <person name="Singh U.S."/>
            <person name="Singh V.K."/>
            <person name="Kumar A."/>
        </authorList>
    </citation>
    <scope>NUCLEOTIDE SEQUENCE [MRNA] OF 187-370</scope>
    <source>
        <strain>cv. Nipponbare</strain>
    </source>
</reference>
<reference key="7">
    <citation type="journal article" date="2001" name="Biochim. Biophys. Acta">
        <title>Identification of Dof proteins with implication in the gibberellin-regulated expression of a peptidase gene following the germination of rice grains.</title>
        <authorList>
            <person name="Washio K."/>
        </authorList>
    </citation>
    <scope>DEVELOPMENTAL STAGE</scope>
</reference>
<protein>
    <recommendedName>
        <fullName evidence="6">Dof zinc finger protein 2</fullName>
        <shortName evidence="5">OsDof2</shortName>
    </recommendedName>
</protein>
<organism>
    <name type="scientific">Oryza sativa subsp. japonica</name>
    <name type="common">Rice</name>
    <dbReference type="NCBI Taxonomy" id="39947"/>
    <lineage>
        <taxon>Eukaryota</taxon>
        <taxon>Viridiplantae</taxon>
        <taxon>Streptophyta</taxon>
        <taxon>Embryophyta</taxon>
        <taxon>Tracheophyta</taxon>
        <taxon>Spermatophyta</taxon>
        <taxon>Magnoliopsida</taxon>
        <taxon>Liliopsida</taxon>
        <taxon>Poales</taxon>
        <taxon>Poaceae</taxon>
        <taxon>BOP clade</taxon>
        <taxon>Oryzoideae</taxon>
        <taxon>Oryzeae</taxon>
        <taxon>Oryzinae</taxon>
        <taxon>Oryza</taxon>
        <taxon>Oryza sativa</taxon>
    </lineage>
</organism>
<sequence>MDAAHWHQGLGLVKPMEEMLMGANPNPNGSSNQPPPPPSSAASAQRPIAPPAAGAAAGAGAAGAGAGTERRARPQKEKALNCPRCNSTNTKFCYYNNYSLQQPRYFCKTCRRYWTEGGSLRNVPVGGGSRKNKRSSSSVVPSAAASASTSAAVSGSVPVGLAAKNPKLMHEGAQDLNLAFPHHHGRALQPPEFTAFPSLESSSVCNPGGNLAAANGAGGRGSVGAFSAMELLRSTGCYVPLPQMAPLGMPAEYAAAGFHLGEFRMPPPPQQQQQQQAQTVLGFSLDTHGAGAGGGSGVFGACSAGLQESAAGRLLFPFEDLKPVVSAAAGDANSGGDHQYDHGKNQGGGGGVIGGHEAPGFWNSSMIGNGSSNGGGGGGSW</sequence>
<name>DOF2_ORYSJ</name>
<evidence type="ECO:0000250" key="1">
    <source>
        <dbReference type="UniProtKB" id="Q6K537"/>
    </source>
</evidence>
<evidence type="ECO:0000255" key="2">
    <source>
        <dbReference type="PROSITE-ProRule" id="PRU00071"/>
    </source>
</evidence>
<evidence type="ECO:0000256" key="3">
    <source>
        <dbReference type="SAM" id="MobiDB-lite"/>
    </source>
</evidence>
<evidence type="ECO:0000269" key="4">
    <source>
    </source>
</evidence>
<evidence type="ECO:0000303" key="5">
    <source ref="1"/>
</evidence>
<evidence type="ECO:0000305" key="6"/>
<evidence type="ECO:0000312" key="7">
    <source>
        <dbReference type="EMBL" id="BAD29458.1"/>
    </source>
</evidence>
<evidence type="ECO:0000312" key="8">
    <source>
        <dbReference type="EMBL" id="BAS80255.1"/>
    </source>
</evidence>
<evidence type="ECO:0000312" key="9">
    <source>
        <dbReference type="EMBL" id="EEE57560.1"/>
    </source>
</evidence>
<gene>
    <name evidence="5" type="primary">DOF2</name>
    <name evidence="8" type="ordered locus">Os02g0673700</name>
    <name evidence="6" type="ordered locus">LOC_Os02g45200</name>
    <name evidence="9" type="ORF">OsJ_07904</name>
    <name evidence="7" type="ORF">P0657H12.10</name>
</gene>
<dbReference type="EMBL" id="AB028130">
    <property type="protein sequence ID" value="BAA78573.1"/>
    <property type="molecule type" value="mRNA"/>
</dbReference>
<dbReference type="EMBL" id="AP005885">
    <property type="protein sequence ID" value="BAD29458.1"/>
    <property type="molecule type" value="Genomic_DNA"/>
</dbReference>
<dbReference type="EMBL" id="AP008208">
    <property type="protein sequence ID" value="BAF09630.1"/>
    <property type="molecule type" value="Genomic_DNA"/>
</dbReference>
<dbReference type="EMBL" id="AP014958">
    <property type="protein sequence ID" value="BAS80255.1"/>
    <property type="molecule type" value="Genomic_DNA"/>
</dbReference>
<dbReference type="EMBL" id="AP014958">
    <property type="protein sequence ID" value="BAS80256.1"/>
    <property type="molecule type" value="Genomic_DNA"/>
</dbReference>
<dbReference type="EMBL" id="CM000139">
    <property type="protein sequence ID" value="EEE57560.1"/>
    <property type="molecule type" value="Genomic_DNA"/>
</dbReference>
<dbReference type="EMBL" id="GQ183531">
    <property type="protein sequence ID" value="ACT31341.1"/>
    <property type="molecule type" value="mRNA"/>
</dbReference>
<dbReference type="RefSeq" id="XP_015627550.1">
    <property type="nucleotide sequence ID" value="XM_015772064.1"/>
</dbReference>
<dbReference type="RefSeq" id="XP_015627551.1">
    <property type="nucleotide sequence ID" value="XM_015772065.1"/>
</dbReference>
<dbReference type="FunCoup" id="B9F1L8">
    <property type="interactions" value="2907"/>
</dbReference>
<dbReference type="STRING" id="39947.B9F1L8"/>
<dbReference type="PaxDb" id="39947-B9F1L8"/>
<dbReference type="EnsemblPlants" id="Os02t0673700-01">
    <molecule id="B9F1L8-1"/>
    <property type="protein sequence ID" value="Os02t0673700-01"/>
    <property type="gene ID" value="Os02g0673700"/>
</dbReference>
<dbReference type="Gramene" id="Os02t0673700-01">
    <molecule id="B9F1L8-1"/>
    <property type="protein sequence ID" value="Os02t0673700-01"/>
    <property type="gene ID" value="Os02g0673700"/>
</dbReference>
<dbReference type="KEGG" id="dosa:Os02g0673700"/>
<dbReference type="eggNOG" id="ENOG502QPN9">
    <property type="taxonomic scope" value="Eukaryota"/>
</dbReference>
<dbReference type="HOGENOM" id="CLU_036438_5_1_1"/>
<dbReference type="InParanoid" id="B9F1L8"/>
<dbReference type="OMA" id="IYARIGH"/>
<dbReference type="OrthoDB" id="1927254at2759"/>
<dbReference type="Proteomes" id="UP000000763">
    <property type="component" value="Chromosome 2"/>
</dbReference>
<dbReference type="Proteomes" id="UP000007752">
    <property type="component" value="Chromosome 2"/>
</dbReference>
<dbReference type="Proteomes" id="UP000059680">
    <property type="component" value="Chromosome 2"/>
</dbReference>
<dbReference type="GO" id="GO:0005634">
    <property type="term" value="C:nucleus"/>
    <property type="evidence" value="ECO:0007669"/>
    <property type="project" value="UniProtKB-SubCell"/>
</dbReference>
<dbReference type="GO" id="GO:0003677">
    <property type="term" value="F:DNA binding"/>
    <property type="evidence" value="ECO:0007669"/>
    <property type="project" value="UniProtKB-KW"/>
</dbReference>
<dbReference type="GO" id="GO:0003700">
    <property type="term" value="F:DNA-binding transcription factor activity"/>
    <property type="evidence" value="ECO:0007669"/>
    <property type="project" value="InterPro"/>
</dbReference>
<dbReference type="GO" id="GO:0008270">
    <property type="term" value="F:zinc ion binding"/>
    <property type="evidence" value="ECO:0007669"/>
    <property type="project" value="UniProtKB-KW"/>
</dbReference>
<dbReference type="InterPro" id="IPR045174">
    <property type="entry name" value="Dof"/>
</dbReference>
<dbReference type="InterPro" id="IPR003851">
    <property type="entry name" value="Znf_Dof"/>
</dbReference>
<dbReference type="PANTHER" id="PTHR31992:SF330">
    <property type="entry name" value="DOF ZINC FINGER PROTEIN 2"/>
    <property type="match status" value="1"/>
</dbReference>
<dbReference type="PANTHER" id="PTHR31992">
    <property type="entry name" value="DOF ZINC FINGER PROTEIN DOF1.4-RELATED"/>
    <property type="match status" value="1"/>
</dbReference>
<dbReference type="Pfam" id="PF02701">
    <property type="entry name" value="Zn_ribbon_Dof"/>
    <property type="match status" value="1"/>
</dbReference>
<dbReference type="PROSITE" id="PS01361">
    <property type="entry name" value="ZF_DOF_1"/>
    <property type="match status" value="1"/>
</dbReference>
<dbReference type="PROSITE" id="PS50884">
    <property type="entry name" value="ZF_DOF_2"/>
    <property type="match status" value="1"/>
</dbReference>
<feature type="chain" id="PRO_0000441228" description="Dof zinc finger protein 2">
    <location>
        <begin position="1"/>
        <end position="381"/>
    </location>
</feature>
<feature type="zinc finger region" description="Dof-type" evidence="2">
    <location>
        <begin position="80"/>
        <end position="134"/>
    </location>
</feature>
<feature type="region of interest" description="Disordered" evidence="3">
    <location>
        <begin position="19"/>
        <end position="81"/>
    </location>
</feature>
<feature type="region of interest" description="Disordered" evidence="3">
    <location>
        <begin position="329"/>
        <end position="349"/>
    </location>
</feature>
<feature type="compositionally biased region" description="Low complexity" evidence="3">
    <location>
        <begin position="23"/>
        <end position="32"/>
    </location>
</feature>
<feature type="compositionally biased region" description="Low complexity" evidence="3">
    <location>
        <begin position="40"/>
        <end position="59"/>
    </location>
</feature>
<feature type="compositionally biased region" description="Basic and acidic residues" evidence="3">
    <location>
        <begin position="68"/>
        <end position="79"/>
    </location>
</feature>
<feature type="binding site" evidence="2">
    <location>
        <position position="82"/>
    </location>
    <ligand>
        <name>Zn(2+)</name>
        <dbReference type="ChEBI" id="CHEBI:29105"/>
    </ligand>
</feature>
<feature type="binding site" evidence="2">
    <location>
        <position position="85"/>
    </location>
    <ligand>
        <name>Zn(2+)</name>
        <dbReference type="ChEBI" id="CHEBI:29105"/>
    </ligand>
</feature>
<feature type="binding site" evidence="2">
    <location>
        <position position="107"/>
    </location>
    <ligand>
        <name>Zn(2+)</name>
        <dbReference type="ChEBI" id="CHEBI:29105"/>
    </ligand>
</feature>
<feature type="binding site" evidence="2">
    <location>
        <position position="110"/>
    </location>
    <ligand>
        <name>Zn(2+)</name>
        <dbReference type="ChEBI" id="CHEBI:29105"/>
    </ligand>
</feature>
<feature type="splice variant" id="VSP_059044" description="In isoform 3.">
    <location>
        <begin position="1"/>
        <end position="15"/>
    </location>
</feature>
<feature type="splice variant" id="VSP_059045" description="In isoform 2.">
    <original>MDAAHWHQ</original>
    <variation>MW</variation>
    <location>
        <begin position="1"/>
        <end position="8"/>
    </location>
</feature>
<comment type="function">
    <text evidence="1">Transcription factor that may transactivate seed storage protein genes in developing seeds.</text>
</comment>
<comment type="subcellular location">
    <subcellularLocation>
        <location evidence="2">Nucleus</location>
    </subcellularLocation>
</comment>
<comment type="alternative products">
    <event type="alternative splicing"/>
    <isoform>
        <id>B9F1L8-1</id>
        <name>1</name>
        <sequence type="displayed"/>
    </isoform>
    <isoform>
        <id>B9F1L8-2</id>
        <name>2</name>
        <sequence type="described" ref="VSP_059045"/>
    </isoform>
    <isoform>
        <id>B9F1L8-3</id>
        <name>3</name>
        <sequence type="described" ref="VSP_059044"/>
    </isoform>
</comment>
<comment type="developmental stage">
    <text evidence="4">Expressed in germinating seeds 3 to 5 days after imbibition.</text>
</comment>